<organism>
    <name type="scientific">Yersinia pestis bv. Antiqua (strain Nepal516)</name>
    <dbReference type="NCBI Taxonomy" id="377628"/>
    <lineage>
        <taxon>Bacteria</taxon>
        <taxon>Pseudomonadati</taxon>
        <taxon>Pseudomonadota</taxon>
        <taxon>Gammaproteobacteria</taxon>
        <taxon>Enterobacterales</taxon>
        <taxon>Yersiniaceae</taxon>
        <taxon>Yersinia</taxon>
    </lineage>
</organism>
<comment type="function">
    <text evidence="1">Catalyzes the final step of fatty acid oxidation in which acetyl-CoA is released and the CoA ester of a fatty acid two carbons shorter is formed.</text>
</comment>
<comment type="catalytic activity">
    <reaction evidence="1">
        <text>an acyl-CoA + acetyl-CoA = a 3-oxoacyl-CoA + CoA</text>
        <dbReference type="Rhea" id="RHEA:21564"/>
        <dbReference type="ChEBI" id="CHEBI:57287"/>
        <dbReference type="ChEBI" id="CHEBI:57288"/>
        <dbReference type="ChEBI" id="CHEBI:58342"/>
        <dbReference type="ChEBI" id="CHEBI:90726"/>
        <dbReference type="EC" id="2.3.1.16"/>
    </reaction>
</comment>
<comment type="pathway">
    <text evidence="1">Lipid metabolism; fatty acid beta-oxidation.</text>
</comment>
<comment type="subunit">
    <text evidence="1">Heterotetramer of two alpha chains (FadJ) and two beta chains (FadI).</text>
</comment>
<comment type="subcellular location">
    <subcellularLocation>
        <location evidence="1">Cytoplasm</location>
    </subcellularLocation>
</comment>
<comment type="similarity">
    <text evidence="1">Belongs to the thiolase-like superfamily. Thiolase family.</text>
</comment>
<name>FADI_YERPN</name>
<dbReference type="EC" id="2.3.1.16" evidence="1"/>
<dbReference type="EMBL" id="CP000305">
    <property type="protein sequence ID" value="ABG18529.1"/>
    <property type="molecule type" value="Genomic_DNA"/>
</dbReference>
<dbReference type="EMBL" id="ACNQ01000013">
    <property type="protein sequence ID" value="EEO76269.1"/>
    <property type="molecule type" value="Genomic_DNA"/>
</dbReference>
<dbReference type="RefSeq" id="WP_002209704.1">
    <property type="nucleotide sequence ID" value="NZ_ACNQ01000013.1"/>
</dbReference>
<dbReference type="SMR" id="Q1CHK1"/>
<dbReference type="GeneID" id="57975943"/>
<dbReference type="KEGG" id="ypn:YPN_2201"/>
<dbReference type="HOGENOM" id="CLU_031026_2_0_6"/>
<dbReference type="UniPathway" id="UPA00659"/>
<dbReference type="Proteomes" id="UP000008936">
    <property type="component" value="Chromosome"/>
</dbReference>
<dbReference type="GO" id="GO:0005829">
    <property type="term" value="C:cytosol"/>
    <property type="evidence" value="ECO:0007669"/>
    <property type="project" value="TreeGrafter"/>
</dbReference>
<dbReference type="GO" id="GO:0003988">
    <property type="term" value="F:acetyl-CoA C-acyltransferase activity"/>
    <property type="evidence" value="ECO:0007669"/>
    <property type="project" value="UniProtKB-UniRule"/>
</dbReference>
<dbReference type="GO" id="GO:0006635">
    <property type="term" value="P:fatty acid beta-oxidation"/>
    <property type="evidence" value="ECO:0007669"/>
    <property type="project" value="UniProtKB-UniRule"/>
</dbReference>
<dbReference type="CDD" id="cd00751">
    <property type="entry name" value="thiolase"/>
    <property type="match status" value="1"/>
</dbReference>
<dbReference type="FunFam" id="3.40.47.10:FF:000011">
    <property type="entry name" value="3-ketoacyl-CoA thiolase"/>
    <property type="match status" value="1"/>
</dbReference>
<dbReference type="Gene3D" id="3.40.47.10">
    <property type="match status" value="1"/>
</dbReference>
<dbReference type="HAMAP" id="MF_01618">
    <property type="entry name" value="FadI"/>
    <property type="match status" value="1"/>
</dbReference>
<dbReference type="InterPro" id="IPR012806">
    <property type="entry name" value="Ac-CoA_C-AcTrfase_FadI"/>
</dbReference>
<dbReference type="InterPro" id="IPR002155">
    <property type="entry name" value="Thiolase"/>
</dbReference>
<dbReference type="InterPro" id="IPR016039">
    <property type="entry name" value="Thiolase-like"/>
</dbReference>
<dbReference type="InterPro" id="IPR020615">
    <property type="entry name" value="Thiolase_acyl_enz_int_AS"/>
</dbReference>
<dbReference type="InterPro" id="IPR020610">
    <property type="entry name" value="Thiolase_AS"/>
</dbReference>
<dbReference type="InterPro" id="IPR020617">
    <property type="entry name" value="Thiolase_C"/>
</dbReference>
<dbReference type="InterPro" id="IPR020613">
    <property type="entry name" value="Thiolase_CS"/>
</dbReference>
<dbReference type="InterPro" id="IPR020616">
    <property type="entry name" value="Thiolase_N"/>
</dbReference>
<dbReference type="NCBIfam" id="TIGR01930">
    <property type="entry name" value="AcCoA-C-Actrans"/>
    <property type="match status" value="1"/>
</dbReference>
<dbReference type="NCBIfam" id="TIGR02446">
    <property type="entry name" value="FadI"/>
    <property type="match status" value="1"/>
</dbReference>
<dbReference type="NCBIfam" id="NF006516">
    <property type="entry name" value="PRK08963.1"/>
    <property type="match status" value="1"/>
</dbReference>
<dbReference type="PANTHER" id="PTHR18919:SF107">
    <property type="entry name" value="ACETYL-COA ACETYLTRANSFERASE, CYTOSOLIC"/>
    <property type="match status" value="1"/>
</dbReference>
<dbReference type="PANTHER" id="PTHR18919">
    <property type="entry name" value="ACETYL-COA C-ACYLTRANSFERASE"/>
    <property type="match status" value="1"/>
</dbReference>
<dbReference type="Pfam" id="PF02803">
    <property type="entry name" value="Thiolase_C"/>
    <property type="match status" value="1"/>
</dbReference>
<dbReference type="Pfam" id="PF00108">
    <property type="entry name" value="Thiolase_N"/>
    <property type="match status" value="1"/>
</dbReference>
<dbReference type="PIRSF" id="PIRSF000429">
    <property type="entry name" value="Ac-CoA_Ac_transf"/>
    <property type="match status" value="1"/>
</dbReference>
<dbReference type="SUPFAM" id="SSF53901">
    <property type="entry name" value="Thiolase-like"/>
    <property type="match status" value="2"/>
</dbReference>
<dbReference type="PROSITE" id="PS00098">
    <property type="entry name" value="THIOLASE_1"/>
    <property type="match status" value="1"/>
</dbReference>
<dbReference type="PROSITE" id="PS00737">
    <property type="entry name" value="THIOLASE_2"/>
    <property type="match status" value="1"/>
</dbReference>
<dbReference type="PROSITE" id="PS00099">
    <property type="entry name" value="THIOLASE_3"/>
    <property type="match status" value="1"/>
</dbReference>
<protein>
    <recommendedName>
        <fullName evidence="1">3-ketoacyl-CoA thiolase</fullName>
        <ecNumber evidence="1">2.3.1.16</ecNumber>
    </recommendedName>
    <alternativeName>
        <fullName evidence="1">ACSs</fullName>
    </alternativeName>
    <alternativeName>
        <fullName evidence="1">Acetyl-CoA acyltransferase</fullName>
    </alternativeName>
    <alternativeName>
        <fullName evidence="1">Acyl-CoA ligase</fullName>
    </alternativeName>
    <alternativeName>
        <fullName evidence="1">Beta-ketothiolase</fullName>
    </alternativeName>
    <alternativeName>
        <fullName evidence="1">Fatty acid oxidation complex subunit beta</fullName>
    </alternativeName>
</protein>
<proteinExistence type="inferred from homology"/>
<feature type="chain" id="PRO_1000069524" description="3-ketoacyl-CoA thiolase">
    <location>
        <begin position="1"/>
        <end position="436"/>
    </location>
</feature>
<feature type="active site" description="Acyl-thioester intermediate" evidence="1">
    <location>
        <position position="99"/>
    </location>
</feature>
<feature type="active site" description="Proton acceptor" evidence="1">
    <location>
        <position position="392"/>
    </location>
</feature>
<feature type="active site" description="Proton acceptor" evidence="1">
    <location>
        <position position="422"/>
    </location>
</feature>
<accession>Q1CHK1</accession>
<accession>C4GU82</accession>
<gene>
    <name evidence="1" type="primary">fadI</name>
    <name type="ordered locus">YPN_2201</name>
    <name type="ORF">YP516_2466</name>
</gene>
<sequence length="436" mass="46311">MSKPLPLVTRQGDRIVIVNGLRTPFAKQATAYHGVPAVDLGKIVVSELLARSGISSELIDQLVFGQVVQMPEAPNIAREIVLGTGMSVHTDAYSVSRACATSFQAVANVAESIIAGSVDIAIAGGADSSSVLPIGVSKALARTLVDANKARSLSQKLKLFSRLRLRDLLPVAPAVAEYSTGLRMGDTAEQMAKTYGISREDQDALALRSHQLAAEAWQQGWLHDEVMTAYIPPYREAIIEDNNIRKDSTLAQYAKLRPAFDRQHGSVTAANSTPLTDGAAAVLMMSESKAKALGLPPLGYLRSFAFSAIDVWQDMLLGPSYATPLALDRAGITLADLTLIDMHEAFAAQTLANLKMFASDTFAREKLGRSQAIGEVDMSKFNVLGGSIAYGHPFAATGARMITQTLNELRRRGGGLGLTTACAAGGLGAAMILEVE</sequence>
<evidence type="ECO:0000255" key="1">
    <source>
        <dbReference type="HAMAP-Rule" id="MF_01618"/>
    </source>
</evidence>
<reference key="1">
    <citation type="journal article" date="2006" name="J. Bacteriol.">
        <title>Complete genome sequence of Yersinia pestis strains Antiqua and Nepal516: evidence of gene reduction in an emerging pathogen.</title>
        <authorList>
            <person name="Chain P.S.G."/>
            <person name="Hu P."/>
            <person name="Malfatti S.A."/>
            <person name="Radnedge L."/>
            <person name="Larimer F."/>
            <person name="Vergez L.M."/>
            <person name="Worsham P."/>
            <person name="Chu M.C."/>
            <person name="Andersen G.L."/>
        </authorList>
    </citation>
    <scope>NUCLEOTIDE SEQUENCE [LARGE SCALE GENOMIC DNA]</scope>
    <source>
        <strain>Nepal516</strain>
    </source>
</reference>
<reference key="2">
    <citation type="submission" date="2009-04" db="EMBL/GenBank/DDBJ databases">
        <title>Yersinia pestis Nepal516A whole genome shotgun sequencing project.</title>
        <authorList>
            <person name="Plunkett G. III"/>
            <person name="Anderson B.D."/>
            <person name="Baumler D.J."/>
            <person name="Burland V."/>
            <person name="Cabot E.L."/>
            <person name="Glasner J.D."/>
            <person name="Mau B."/>
            <person name="Neeno-Eckwall E."/>
            <person name="Perna N.T."/>
            <person name="Munk A.C."/>
            <person name="Tapia R."/>
            <person name="Green L.D."/>
            <person name="Rogers Y.C."/>
            <person name="Detter J.C."/>
            <person name="Bruce D.C."/>
            <person name="Brettin T.S."/>
        </authorList>
    </citation>
    <scope>NUCLEOTIDE SEQUENCE [LARGE SCALE GENOMIC DNA]</scope>
    <source>
        <strain>Nepal516</strain>
    </source>
</reference>
<keyword id="KW-0012">Acyltransferase</keyword>
<keyword id="KW-0963">Cytoplasm</keyword>
<keyword id="KW-0276">Fatty acid metabolism</keyword>
<keyword id="KW-0442">Lipid degradation</keyword>
<keyword id="KW-0443">Lipid metabolism</keyword>
<keyword id="KW-0808">Transferase</keyword>